<name>ISPE_CAMJE</name>
<accession>Q9PNJ0</accession>
<accession>Q0P9F0</accession>
<dbReference type="EC" id="2.7.1.148" evidence="1"/>
<dbReference type="EMBL" id="AL111168">
    <property type="protein sequence ID" value="CAL35221.1"/>
    <property type="molecule type" value="Genomic_DNA"/>
</dbReference>
<dbReference type="PIR" id="C81314">
    <property type="entry name" value="C81314"/>
</dbReference>
<dbReference type="RefSeq" id="WP_002859130.1">
    <property type="nucleotide sequence ID" value="NZ_SZUC01000001.1"/>
</dbReference>
<dbReference type="RefSeq" id="YP_002344497.1">
    <property type="nucleotide sequence ID" value="NC_002163.1"/>
</dbReference>
<dbReference type="SMR" id="Q9PNJ0"/>
<dbReference type="IntAct" id="Q9PNJ0">
    <property type="interactions" value="2"/>
</dbReference>
<dbReference type="STRING" id="192222.Cj1104"/>
<dbReference type="PaxDb" id="192222-Cj1104"/>
<dbReference type="EnsemblBacteria" id="CAL35221">
    <property type="protein sequence ID" value="CAL35221"/>
    <property type="gene ID" value="Cj1104"/>
</dbReference>
<dbReference type="GeneID" id="905395"/>
<dbReference type="KEGG" id="cje:Cj1104"/>
<dbReference type="PATRIC" id="fig|192222.6.peg.1086"/>
<dbReference type="eggNOG" id="COG1947">
    <property type="taxonomic scope" value="Bacteria"/>
</dbReference>
<dbReference type="HOGENOM" id="CLU_053057_2_2_7"/>
<dbReference type="OrthoDB" id="9809438at2"/>
<dbReference type="UniPathway" id="UPA00056">
    <property type="reaction ID" value="UER00094"/>
</dbReference>
<dbReference type="Proteomes" id="UP000000799">
    <property type="component" value="Chromosome"/>
</dbReference>
<dbReference type="GO" id="GO:0050515">
    <property type="term" value="F:4-(cytidine 5'-diphospho)-2-C-methyl-D-erythritol kinase activity"/>
    <property type="evidence" value="ECO:0007669"/>
    <property type="project" value="UniProtKB-UniRule"/>
</dbReference>
<dbReference type="GO" id="GO:0005524">
    <property type="term" value="F:ATP binding"/>
    <property type="evidence" value="ECO:0007669"/>
    <property type="project" value="UniProtKB-UniRule"/>
</dbReference>
<dbReference type="GO" id="GO:0019288">
    <property type="term" value="P:isopentenyl diphosphate biosynthetic process, methylerythritol 4-phosphate pathway"/>
    <property type="evidence" value="ECO:0007669"/>
    <property type="project" value="UniProtKB-UniRule"/>
</dbReference>
<dbReference type="GO" id="GO:0016114">
    <property type="term" value="P:terpenoid biosynthetic process"/>
    <property type="evidence" value="ECO:0007669"/>
    <property type="project" value="InterPro"/>
</dbReference>
<dbReference type="Gene3D" id="3.30.230.10">
    <property type="match status" value="1"/>
</dbReference>
<dbReference type="Gene3D" id="3.30.70.890">
    <property type="entry name" value="GHMP kinase, C-terminal domain"/>
    <property type="match status" value="1"/>
</dbReference>
<dbReference type="HAMAP" id="MF_00061">
    <property type="entry name" value="IspE"/>
    <property type="match status" value="1"/>
</dbReference>
<dbReference type="InterPro" id="IPR036554">
    <property type="entry name" value="GHMP_kinase_C_sf"/>
</dbReference>
<dbReference type="InterPro" id="IPR006204">
    <property type="entry name" value="GHMP_kinase_N_dom"/>
</dbReference>
<dbReference type="InterPro" id="IPR004424">
    <property type="entry name" value="IspE"/>
</dbReference>
<dbReference type="InterPro" id="IPR020568">
    <property type="entry name" value="Ribosomal_Su5_D2-typ_SF"/>
</dbReference>
<dbReference type="InterPro" id="IPR014721">
    <property type="entry name" value="Ribsml_uS5_D2-typ_fold_subgr"/>
</dbReference>
<dbReference type="NCBIfam" id="TIGR00154">
    <property type="entry name" value="ispE"/>
    <property type="match status" value="1"/>
</dbReference>
<dbReference type="NCBIfam" id="NF003216">
    <property type="entry name" value="PRK04181.1"/>
    <property type="match status" value="1"/>
</dbReference>
<dbReference type="PANTHER" id="PTHR43527">
    <property type="entry name" value="4-DIPHOSPHOCYTIDYL-2-C-METHYL-D-ERYTHRITOL KINASE, CHLOROPLASTIC"/>
    <property type="match status" value="1"/>
</dbReference>
<dbReference type="PANTHER" id="PTHR43527:SF2">
    <property type="entry name" value="4-DIPHOSPHOCYTIDYL-2-C-METHYL-D-ERYTHRITOL KINASE, CHLOROPLASTIC"/>
    <property type="match status" value="1"/>
</dbReference>
<dbReference type="Pfam" id="PF00288">
    <property type="entry name" value="GHMP_kinases_N"/>
    <property type="match status" value="1"/>
</dbReference>
<dbReference type="PIRSF" id="PIRSF010376">
    <property type="entry name" value="IspE"/>
    <property type="match status" value="1"/>
</dbReference>
<dbReference type="SUPFAM" id="SSF55060">
    <property type="entry name" value="GHMP Kinase, C-terminal domain"/>
    <property type="match status" value="1"/>
</dbReference>
<dbReference type="SUPFAM" id="SSF54211">
    <property type="entry name" value="Ribosomal protein S5 domain 2-like"/>
    <property type="match status" value="1"/>
</dbReference>
<reference key="1">
    <citation type="journal article" date="2000" name="Nature">
        <title>The genome sequence of the food-borne pathogen Campylobacter jejuni reveals hypervariable sequences.</title>
        <authorList>
            <person name="Parkhill J."/>
            <person name="Wren B.W."/>
            <person name="Mungall K.L."/>
            <person name="Ketley J.M."/>
            <person name="Churcher C.M."/>
            <person name="Basham D."/>
            <person name="Chillingworth T."/>
            <person name="Davies R.M."/>
            <person name="Feltwell T."/>
            <person name="Holroyd S."/>
            <person name="Jagels K."/>
            <person name="Karlyshev A.V."/>
            <person name="Moule S."/>
            <person name="Pallen M.J."/>
            <person name="Penn C.W."/>
            <person name="Quail M.A."/>
            <person name="Rajandream M.A."/>
            <person name="Rutherford K.M."/>
            <person name="van Vliet A.H.M."/>
            <person name="Whitehead S."/>
            <person name="Barrell B.G."/>
        </authorList>
    </citation>
    <scope>NUCLEOTIDE SEQUENCE [LARGE SCALE GENOMIC DNA]</scope>
    <source>
        <strain>ATCC 700819 / NCTC 11168</strain>
    </source>
</reference>
<gene>
    <name evidence="1" type="primary">ispE</name>
    <name type="ordered locus">Cj1104</name>
</gene>
<organism>
    <name type="scientific">Campylobacter jejuni subsp. jejuni serotype O:2 (strain ATCC 700819 / NCTC 11168)</name>
    <dbReference type="NCBI Taxonomy" id="192222"/>
    <lineage>
        <taxon>Bacteria</taxon>
        <taxon>Pseudomonadati</taxon>
        <taxon>Campylobacterota</taxon>
        <taxon>Epsilonproteobacteria</taxon>
        <taxon>Campylobacterales</taxon>
        <taxon>Campylobacteraceae</taxon>
        <taxon>Campylobacter</taxon>
    </lineage>
</organism>
<comment type="function">
    <text evidence="1">Catalyzes the phosphorylation of the position 2 hydroxy group of 4-diphosphocytidyl-2C-methyl-D-erythritol.</text>
</comment>
<comment type="catalytic activity">
    <reaction evidence="1">
        <text>4-CDP-2-C-methyl-D-erythritol + ATP = 4-CDP-2-C-methyl-D-erythritol 2-phosphate + ADP + H(+)</text>
        <dbReference type="Rhea" id="RHEA:18437"/>
        <dbReference type="ChEBI" id="CHEBI:15378"/>
        <dbReference type="ChEBI" id="CHEBI:30616"/>
        <dbReference type="ChEBI" id="CHEBI:57823"/>
        <dbReference type="ChEBI" id="CHEBI:57919"/>
        <dbReference type="ChEBI" id="CHEBI:456216"/>
        <dbReference type="EC" id="2.7.1.148"/>
    </reaction>
</comment>
<comment type="pathway">
    <text evidence="1">Isoprenoid biosynthesis; isopentenyl diphosphate biosynthesis via DXP pathway; isopentenyl diphosphate from 1-deoxy-D-xylulose 5-phosphate: step 3/6.</text>
</comment>
<comment type="similarity">
    <text evidence="1">Belongs to the GHMP kinase family. IspE subfamily.</text>
</comment>
<feature type="chain" id="PRO_0000189199" description="4-diphosphocytidyl-2-C-methyl-D-erythritol kinase">
    <location>
        <begin position="1"/>
        <end position="255"/>
    </location>
</feature>
<feature type="active site" evidence="1">
    <location>
        <position position="6"/>
    </location>
</feature>
<feature type="active site" evidence="1">
    <location>
        <position position="137"/>
    </location>
</feature>
<feature type="binding site" evidence="1">
    <location>
        <begin position="95"/>
        <end position="105"/>
    </location>
    <ligand>
        <name>ATP</name>
        <dbReference type="ChEBI" id="CHEBI:30616"/>
    </ligand>
</feature>
<keyword id="KW-0067">ATP-binding</keyword>
<keyword id="KW-0414">Isoprene biosynthesis</keyword>
<keyword id="KW-0418">Kinase</keyword>
<keyword id="KW-0547">Nucleotide-binding</keyword>
<keyword id="KW-1185">Reference proteome</keyword>
<keyword id="KW-0808">Transferase</keyword>
<protein>
    <recommendedName>
        <fullName evidence="1">4-diphosphocytidyl-2-C-methyl-D-erythritol kinase</fullName>
        <shortName evidence="1">CMK</shortName>
        <ecNumber evidence="1">2.7.1.148</ecNumber>
    </recommendedName>
    <alternativeName>
        <fullName evidence="1">4-(cytidine-5'-diphospho)-2-C-methyl-D-erythritol kinase</fullName>
    </alternativeName>
</protein>
<evidence type="ECO:0000255" key="1">
    <source>
        <dbReference type="HAMAP-Rule" id="MF_00061"/>
    </source>
</evidence>
<sequence>MKAYAKANIFLKLTGFDSRKYHLLESRFILLKDVFDELELVDKESDSKKEFEIISNFKCENNIIQKAYLLLSRRYNNELKELFSKKSLKLTKNIPVCAGLGGGSSDCASFLLLINETLNLKLNLQELINLSIQLGSDIAFFLSGFHSANVSSCGEIIEEFEDDIPNLKWTFPQISCQTKAVYDEFDRGIFDFQKNNNQAQIYKKLSTKELLQNFKNKELNDLFTPCATLYPKMKSYLQEDFFLSGSGSSVFKVDR</sequence>
<proteinExistence type="inferred from homology"/>